<organism>
    <name type="scientific">Ureaplasma parvum serovar 3 (strain ATCC 700970)</name>
    <dbReference type="NCBI Taxonomy" id="273119"/>
    <lineage>
        <taxon>Bacteria</taxon>
        <taxon>Bacillati</taxon>
        <taxon>Mycoplasmatota</taxon>
        <taxon>Mycoplasmoidales</taxon>
        <taxon>Mycoplasmoidaceae</taxon>
        <taxon>Ureaplasma</taxon>
    </lineage>
</organism>
<comment type="function">
    <text evidence="1">May play a role in DNA repair. It seems to be involved in an RecBC-independent recombinational process of DNA repair. It may act with RecF and RecO.</text>
</comment>
<comment type="similarity">
    <text evidence="1">Belongs to the RecR family.</text>
</comment>
<dbReference type="EMBL" id="AF222894">
    <property type="protein sequence ID" value="AAF30494.1"/>
    <property type="molecule type" value="Genomic_DNA"/>
</dbReference>
<dbReference type="RefSeq" id="WP_006688992.1">
    <property type="nucleotide sequence ID" value="NC_002162.1"/>
</dbReference>
<dbReference type="SMR" id="Q9PR56"/>
<dbReference type="STRING" id="273119.UU089"/>
<dbReference type="EnsemblBacteria" id="AAF30494">
    <property type="protein sequence ID" value="AAF30494"/>
    <property type="gene ID" value="UU089"/>
</dbReference>
<dbReference type="GeneID" id="29672204"/>
<dbReference type="KEGG" id="uur:UU089"/>
<dbReference type="eggNOG" id="COG0353">
    <property type="taxonomic scope" value="Bacteria"/>
</dbReference>
<dbReference type="HOGENOM" id="CLU_060739_1_1_14"/>
<dbReference type="OrthoDB" id="9802672at2"/>
<dbReference type="Proteomes" id="UP000000423">
    <property type="component" value="Chromosome"/>
</dbReference>
<dbReference type="GO" id="GO:0003677">
    <property type="term" value="F:DNA binding"/>
    <property type="evidence" value="ECO:0007669"/>
    <property type="project" value="UniProtKB-UniRule"/>
</dbReference>
<dbReference type="GO" id="GO:0008270">
    <property type="term" value="F:zinc ion binding"/>
    <property type="evidence" value="ECO:0007669"/>
    <property type="project" value="UniProtKB-KW"/>
</dbReference>
<dbReference type="GO" id="GO:0006310">
    <property type="term" value="P:DNA recombination"/>
    <property type="evidence" value="ECO:0007669"/>
    <property type="project" value="UniProtKB-UniRule"/>
</dbReference>
<dbReference type="GO" id="GO:0006281">
    <property type="term" value="P:DNA repair"/>
    <property type="evidence" value="ECO:0007669"/>
    <property type="project" value="UniProtKB-UniRule"/>
</dbReference>
<dbReference type="CDD" id="cd01025">
    <property type="entry name" value="TOPRIM_recR"/>
    <property type="match status" value="1"/>
</dbReference>
<dbReference type="Gene3D" id="3.40.1360.10">
    <property type="match status" value="1"/>
</dbReference>
<dbReference type="Gene3D" id="1.10.8.420">
    <property type="entry name" value="RecR Domain 1"/>
    <property type="match status" value="1"/>
</dbReference>
<dbReference type="HAMAP" id="MF_00017">
    <property type="entry name" value="RecR"/>
    <property type="match status" value="1"/>
</dbReference>
<dbReference type="InterPro" id="IPR000093">
    <property type="entry name" value="DNA_Rcmb_RecR"/>
</dbReference>
<dbReference type="InterPro" id="IPR023627">
    <property type="entry name" value="Rcmb_RecR"/>
</dbReference>
<dbReference type="InterPro" id="IPR015967">
    <property type="entry name" value="Rcmb_RecR_Znf"/>
</dbReference>
<dbReference type="InterPro" id="IPR006171">
    <property type="entry name" value="TOPRIM_dom"/>
</dbReference>
<dbReference type="InterPro" id="IPR034137">
    <property type="entry name" value="TOPRIM_RecR"/>
</dbReference>
<dbReference type="NCBIfam" id="TIGR00615">
    <property type="entry name" value="recR"/>
    <property type="match status" value="1"/>
</dbReference>
<dbReference type="PANTHER" id="PTHR30446">
    <property type="entry name" value="RECOMBINATION PROTEIN RECR"/>
    <property type="match status" value="1"/>
</dbReference>
<dbReference type="PANTHER" id="PTHR30446:SF0">
    <property type="entry name" value="RECOMBINATION PROTEIN RECR"/>
    <property type="match status" value="1"/>
</dbReference>
<dbReference type="Pfam" id="PF21175">
    <property type="entry name" value="RecR_C"/>
    <property type="match status" value="1"/>
</dbReference>
<dbReference type="Pfam" id="PF21176">
    <property type="entry name" value="RecR_HhH"/>
    <property type="match status" value="1"/>
</dbReference>
<dbReference type="Pfam" id="PF13662">
    <property type="entry name" value="Toprim_4"/>
    <property type="match status" value="1"/>
</dbReference>
<dbReference type="SUPFAM" id="SSF111304">
    <property type="entry name" value="Recombination protein RecR"/>
    <property type="match status" value="1"/>
</dbReference>
<dbReference type="PROSITE" id="PS01300">
    <property type="entry name" value="RECR"/>
    <property type="match status" value="1"/>
</dbReference>
<dbReference type="PROSITE" id="PS50880">
    <property type="entry name" value="TOPRIM"/>
    <property type="match status" value="1"/>
</dbReference>
<keyword id="KW-0227">DNA damage</keyword>
<keyword id="KW-0233">DNA recombination</keyword>
<keyword id="KW-0234">DNA repair</keyword>
<keyword id="KW-0479">Metal-binding</keyword>
<keyword id="KW-1185">Reference proteome</keyword>
<keyword id="KW-0862">Zinc</keyword>
<keyword id="KW-0863">Zinc-finger</keyword>
<reference key="1">
    <citation type="journal article" date="2000" name="Nature">
        <title>The complete sequence of the mucosal pathogen Ureaplasma urealyticum.</title>
        <authorList>
            <person name="Glass J.I."/>
            <person name="Lefkowitz E.J."/>
            <person name="Glass J.S."/>
            <person name="Heiner C.R."/>
            <person name="Chen E.Y."/>
            <person name="Cassell G.H."/>
        </authorList>
    </citation>
    <scope>NUCLEOTIDE SEQUENCE [LARGE SCALE GENOMIC DNA]</scope>
    <source>
        <strain>ATCC 700970</strain>
    </source>
</reference>
<sequence length="201" mass="23295">MSKPVEFEMLVDALKSLPGVGTKNANKWAFFLLQQDQKYIDDLIKRIKEAKTNILKCKYCANFTNKDECDICLNEYRDFTKLMIVTTNEDLERIESANIYNGLYHITNGEISLRKNVVIEHTNIKTIKERVLNGSFKEIIIATSYTHDGEVTADYIIRMLEDIKDLQIYRIGFGIPLNSSIDYADDETLKQSLINKRKIRN</sequence>
<evidence type="ECO:0000255" key="1">
    <source>
        <dbReference type="HAMAP-Rule" id="MF_00017"/>
    </source>
</evidence>
<accession>Q9PR56</accession>
<protein>
    <recommendedName>
        <fullName evidence="1">Recombination protein RecR</fullName>
    </recommendedName>
</protein>
<gene>
    <name evidence="1" type="primary">recR</name>
    <name type="ordered locus">UU089</name>
</gene>
<proteinExistence type="inferred from homology"/>
<feature type="chain" id="PRO_0000190419" description="Recombination protein RecR">
    <location>
        <begin position="1"/>
        <end position="201"/>
    </location>
</feature>
<feature type="domain" description="Toprim" evidence="1">
    <location>
        <begin position="80"/>
        <end position="176"/>
    </location>
</feature>
<feature type="zinc finger region" description="C4-type" evidence="1">
    <location>
        <begin position="57"/>
        <end position="72"/>
    </location>
</feature>
<name>RECR_UREPA</name>